<accession>P02133</accession>
<accession>P06644</accession>
<accession>Q66KT5</accession>
<evidence type="ECO:0000255" key="1">
    <source>
        <dbReference type="PROSITE-ProRule" id="PRU00238"/>
    </source>
</evidence>
<dbReference type="EMBL" id="X03142">
    <property type="protein sequence ID" value="CAA26914.1"/>
    <property type="molecule type" value="mRNA"/>
</dbReference>
<dbReference type="EMBL" id="M21411">
    <property type="protein sequence ID" value="AAA49653.1"/>
    <property type="molecule type" value="Genomic_DNA"/>
</dbReference>
<dbReference type="EMBL" id="BC078566">
    <property type="protein sequence ID" value="AAH78566.1"/>
    <property type="molecule type" value="mRNA"/>
</dbReference>
<dbReference type="PIR" id="A54492">
    <property type="entry name" value="A54492"/>
</dbReference>
<dbReference type="RefSeq" id="NP_001081497.1">
    <property type="nucleotide sequence ID" value="NM_001088028.2"/>
</dbReference>
<dbReference type="SMR" id="P02133"/>
<dbReference type="DNASU" id="397871"/>
<dbReference type="GeneID" id="397871"/>
<dbReference type="KEGG" id="xla:397871"/>
<dbReference type="AGR" id="Xenbase:XB-GENE-5808117"/>
<dbReference type="CTD" id="397871"/>
<dbReference type="Xenbase" id="XB-GENE-5808117">
    <property type="gene designation" value="hbg2.L"/>
</dbReference>
<dbReference type="OMA" id="NPMIANH"/>
<dbReference type="OrthoDB" id="9886081at2759"/>
<dbReference type="Proteomes" id="UP000186698">
    <property type="component" value="Chromosome 9_10L"/>
</dbReference>
<dbReference type="Bgee" id="397871">
    <property type="expression patterns" value="Expressed in internal ear and 2 other cell types or tissues"/>
</dbReference>
<dbReference type="GO" id="GO:0072562">
    <property type="term" value="C:blood microparticle"/>
    <property type="evidence" value="ECO:0007669"/>
    <property type="project" value="TreeGrafter"/>
</dbReference>
<dbReference type="GO" id="GO:0031838">
    <property type="term" value="C:haptoglobin-hemoglobin complex"/>
    <property type="evidence" value="ECO:0000318"/>
    <property type="project" value="GO_Central"/>
</dbReference>
<dbReference type="GO" id="GO:0005833">
    <property type="term" value="C:hemoglobin complex"/>
    <property type="evidence" value="ECO:0000318"/>
    <property type="project" value="GO_Central"/>
</dbReference>
<dbReference type="GO" id="GO:0031720">
    <property type="term" value="F:haptoglobin binding"/>
    <property type="evidence" value="ECO:0007669"/>
    <property type="project" value="TreeGrafter"/>
</dbReference>
<dbReference type="GO" id="GO:0020037">
    <property type="term" value="F:heme binding"/>
    <property type="evidence" value="ECO:0000318"/>
    <property type="project" value="GO_Central"/>
</dbReference>
<dbReference type="GO" id="GO:0046872">
    <property type="term" value="F:metal ion binding"/>
    <property type="evidence" value="ECO:0007669"/>
    <property type="project" value="UniProtKB-KW"/>
</dbReference>
<dbReference type="GO" id="GO:0043177">
    <property type="term" value="F:organic acid binding"/>
    <property type="evidence" value="ECO:0007669"/>
    <property type="project" value="TreeGrafter"/>
</dbReference>
<dbReference type="GO" id="GO:0019825">
    <property type="term" value="F:oxygen binding"/>
    <property type="evidence" value="ECO:0000318"/>
    <property type="project" value="GO_Central"/>
</dbReference>
<dbReference type="GO" id="GO:0005344">
    <property type="term" value="F:oxygen carrier activity"/>
    <property type="evidence" value="ECO:0000318"/>
    <property type="project" value="GO_Central"/>
</dbReference>
<dbReference type="GO" id="GO:0004601">
    <property type="term" value="F:peroxidase activity"/>
    <property type="evidence" value="ECO:0007669"/>
    <property type="project" value="TreeGrafter"/>
</dbReference>
<dbReference type="GO" id="GO:0042744">
    <property type="term" value="P:hydrogen peroxide catabolic process"/>
    <property type="evidence" value="ECO:0000318"/>
    <property type="project" value="GO_Central"/>
</dbReference>
<dbReference type="CDD" id="cd08925">
    <property type="entry name" value="Hb-beta-like"/>
    <property type="match status" value="1"/>
</dbReference>
<dbReference type="FunFam" id="1.10.490.10:FF:000001">
    <property type="entry name" value="Hemoglobin subunit beta"/>
    <property type="match status" value="1"/>
</dbReference>
<dbReference type="Gene3D" id="1.10.490.10">
    <property type="entry name" value="Globins"/>
    <property type="match status" value="1"/>
</dbReference>
<dbReference type="InterPro" id="IPR000971">
    <property type="entry name" value="Globin"/>
</dbReference>
<dbReference type="InterPro" id="IPR009050">
    <property type="entry name" value="Globin-like_sf"/>
</dbReference>
<dbReference type="InterPro" id="IPR012292">
    <property type="entry name" value="Globin/Proto"/>
</dbReference>
<dbReference type="InterPro" id="IPR002337">
    <property type="entry name" value="Hemoglobin_b"/>
</dbReference>
<dbReference type="InterPro" id="IPR050056">
    <property type="entry name" value="Hemoglobin_oxygen_transport"/>
</dbReference>
<dbReference type="PANTHER" id="PTHR11442">
    <property type="entry name" value="HEMOGLOBIN FAMILY MEMBER"/>
    <property type="match status" value="1"/>
</dbReference>
<dbReference type="PANTHER" id="PTHR11442:SF98">
    <property type="entry name" value="HEMOGLOBIN SUBUNIT BETA-2"/>
    <property type="match status" value="1"/>
</dbReference>
<dbReference type="Pfam" id="PF00042">
    <property type="entry name" value="Globin"/>
    <property type="match status" value="1"/>
</dbReference>
<dbReference type="PRINTS" id="PR00814">
    <property type="entry name" value="BETAHAEM"/>
</dbReference>
<dbReference type="SUPFAM" id="SSF46458">
    <property type="entry name" value="Globin-like"/>
    <property type="match status" value="1"/>
</dbReference>
<dbReference type="PROSITE" id="PS01033">
    <property type="entry name" value="GLOBIN"/>
    <property type="match status" value="1"/>
</dbReference>
<name>HBB2_XENLA</name>
<organism>
    <name type="scientific">Xenopus laevis</name>
    <name type="common">African clawed frog</name>
    <dbReference type="NCBI Taxonomy" id="8355"/>
    <lineage>
        <taxon>Eukaryota</taxon>
        <taxon>Metazoa</taxon>
        <taxon>Chordata</taxon>
        <taxon>Craniata</taxon>
        <taxon>Vertebrata</taxon>
        <taxon>Euteleostomi</taxon>
        <taxon>Amphibia</taxon>
        <taxon>Batrachia</taxon>
        <taxon>Anura</taxon>
        <taxon>Pipoidea</taxon>
        <taxon>Pipidae</taxon>
        <taxon>Xenopodinae</taxon>
        <taxon>Xenopus</taxon>
        <taxon>Xenopus</taxon>
    </lineage>
</organism>
<comment type="function">
    <text>Involved in oxygen transport from the lung to the various peripheral tissues.</text>
</comment>
<comment type="subunit">
    <text>Heterotetramer of two alpha chains and two beta chains.</text>
</comment>
<comment type="tissue specificity">
    <text>Red blood cells.</text>
</comment>
<comment type="similarity">
    <text evidence="1">Belongs to the globin family.</text>
</comment>
<keyword id="KW-0349">Heme</keyword>
<keyword id="KW-0408">Iron</keyword>
<keyword id="KW-0479">Metal-binding</keyword>
<keyword id="KW-0561">Oxygen transport</keyword>
<keyword id="KW-1185">Reference proteome</keyword>
<keyword id="KW-0813">Transport</keyword>
<gene>
    <name type="primary">hbb2</name>
</gene>
<reference key="1">
    <citation type="journal article" date="1985" name="Nucleic Acids Res.">
        <title>Comparative nucleotide sequence analysis of two types of larval beta-globin mRNAs of Xenopus laevis.</title>
        <authorList>
            <person name="Knoechel W."/>
            <person name="Meyerhof W."/>
            <person name="Stalder J."/>
            <person name="Weber R."/>
        </authorList>
    </citation>
    <scope>NUCLEOTIDE SEQUENCE [MRNA]</scope>
</reference>
<reference key="2">
    <citation type="journal article" date="1986" name="Mol. Biol. Rep.">
        <title>Sequence analysis of the larval beta II-globin gene of Xenopus laevis.</title>
        <authorList>
            <person name="Meyerhof W."/>
            <person name="Koester M."/>
            <person name="Stalder J."/>
            <person name="Weber R."/>
            <person name="Knoechel W."/>
        </authorList>
    </citation>
    <scope>NUCLEOTIDE SEQUENCE [GENOMIC DNA]</scope>
</reference>
<reference key="3">
    <citation type="submission" date="2004-07" db="EMBL/GenBank/DDBJ databases">
        <authorList>
            <consortium name="NIH - Xenopus Gene Collection (XGC) project"/>
        </authorList>
    </citation>
    <scope>NUCLEOTIDE SEQUENCE [LARGE SCALE MRNA]</scope>
</reference>
<protein>
    <recommendedName>
        <fullName>Hemoglobin subunit beta-2</fullName>
    </recommendedName>
    <alternativeName>
        <fullName>Beta-2-globin</fullName>
        <shortName>B2G</shortName>
    </alternativeName>
    <alternativeName>
        <fullName>Hemoglobin beta-2 chain</fullName>
    </alternativeName>
    <alternativeName>
        <fullName>Hemoglobin beta-minor chain</fullName>
    </alternativeName>
    <alternativeName>
        <fullName>Larval beta-II-globin</fullName>
    </alternativeName>
</protein>
<proteinExistence type="evidence at transcript level"/>
<feature type="initiator methionine" description="Removed">
    <location>
        <position position="1"/>
    </location>
</feature>
<feature type="chain" id="PRO_0000053156" description="Hemoglobin subunit beta-2">
    <location>
        <begin position="2"/>
        <end position="147"/>
    </location>
</feature>
<feature type="domain" description="Globin" evidence="1">
    <location>
        <begin position="3"/>
        <end position="147"/>
    </location>
</feature>
<feature type="binding site" description="distal binding residue">
    <location>
        <position position="64"/>
    </location>
    <ligand>
        <name>heme b</name>
        <dbReference type="ChEBI" id="CHEBI:60344"/>
    </ligand>
    <ligandPart>
        <name>Fe</name>
        <dbReference type="ChEBI" id="CHEBI:18248"/>
    </ligandPart>
</feature>
<feature type="binding site" description="proximal binding residue">
    <location>
        <position position="93"/>
    </location>
    <ligand>
        <name>heme b</name>
        <dbReference type="ChEBI" id="CHEBI:60344"/>
    </ligand>
    <ligandPart>
        <name>Fe</name>
        <dbReference type="ChEBI" id="CHEBI:18248"/>
    </ligandPart>
</feature>
<sequence length="147" mass="15972">MVHWTAEEKAAITSVWQKVNVEHDGHDALGRLLIVYPWTQRYFSNFGNLSNSAAVAGNAKVQAHGKKVLSAVGNAISHIDSVKSSLQQLSKIHATELFVDPENFKRFGGVLVIVLGAKLGTAFTPKVQAAWEKFIAVLVDGLSQGYN</sequence>